<protein>
    <recommendedName>
        <fullName>Secretory carrier-associated membrane protein 5</fullName>
        <shortName>Secretory carrier membrane protein 5</shortName>
        <shortName>hSCAMP5</shortName>
    </recommendedName>
</protein>
<reference key="1">
    <citation type="journal article" date="2009" name="J. Immunol.">
        <title>Human SCAMP5, a novel secretory carrier membrane protein, facilitates calcium-triggered cytokine secretion by interaction with SNARE machinery.</title>
        <authorList>
            <person name="Han C."/>
            <person name="Chen T."/>
            <person name="Yang M."/>
            <person name="Li N."/>
            <person name="Liu H."/>
            <person name="Cao X."/>
        </authorList>
    </citation>
    <scope>NUCLEOTIDE SEQUENCE [MRNA] (ISOFORM 1)</scope>
    <scope>FUNCTION</scope>
    <scope>SUBCELLULAR LOCATION</scope>
    <scope>TISSUE SPECIFICITY</scope>
    <scope>INTERACTION WITH SYT1 AND SYT2</scope>
</reference>
<reference key="2">
    <citation type="journal article" date="2004" name="Nat. Genet.">
        <title>Complete sequencing and characterization of 21,243 full-length human cDNAs.</title>
        <authorList>
            <person name="Ota T."/>
            <person name="Suzuki Y."/>
            <person name="Nishikawa T."/>
            <person name="Otsuki T."/>
            <person name="Sugiyama T."/>
            <person name="Irie R."/>
            <person name="Wakamatsu A."/>
            <person name="Hayashi K."/>
            <person name="Sato H."/>
            <person name="Nagai K."/>
            <person name="Kimura K."/>
            <person name="Makita H."/>
            <person name="Sekine M."/>
            <person name="Obayashi M."/>
            <person name="Nishi T."/>
            <person name="Shibahara T."/>
            <person name="Tanaka T."/>
            <person name="Ishii S."/>
            <person name="Yamamoto J."/>
            <person name="Saito K."/>
            <person name="Kawai Y."/>
            <person name="Isono Y."/>
            <person name="Nakamura Y."/>
            <person name="Nagahari K."/>
            <person name="Murakami K."/>
            <person name="Yasuda T."/>
            <person name="Iwayanagi T."/>
            <person name="Wagatsuma M."/>
            <person name="Shiratori A."/>
            <person name="Sudo H."/>
            <person name="Hosoiri T."/>
            <person name="Kaku Y."/>
            <person name="Kodaira H."/>
            <person name="Kondo H."/>
            <person name="Sugawara M."/>
            <person name="Takahashi M."/>
            <person name="Kanda K."/>
            <person name="Yokoi T."/>
            <person name="Furuya T."/>
            <person name="Kikkawa E."/>
            <person name="Omura Y."/>
            <person name="Abe K."/>
            <person name="Kamihara K."/>
            <person name="Katsuta N."/>
            <person name="Sato K."/>
            <person name="Tanikawa M."/>
            <person name="Yamazaki M."/>
            <person name="Ninomiya K."/>
            <person name="Ishibashi T."/>
            <person name="Yamashita H."/>
            <person name="Murakawa K."/>
            <person name="Fujimori K."/>
            <person name="Tanai H."/>
            <person name="Kimata M."/>
            <person name="Watanabe M."/>
            <person name="Hiraoka S."/>
            <person name="Chiba Y."/>
            <person name="Ishida S."/>
            <person name="Ono Y."/>
            <person name="Takiguchi S."/>
            <person name="Watanabe S."/>
            <person name="Yosida M."/>
            <person name="Hotuta T."/>
            <person name="Kusano J."/>
            <person name="Kanehori K."/>
            <person name="Takahashi-Fujii A."/>
            <person name="Hara H."/>
            <person name="Tanase T.-O."/>
            <person name="Nomura Y."/>
            <person name="Togiya S."/>
            <person name="Komai F."/>
            <person name="Hara R."/>
            <person name="Takeuchi K."/>
            <person name="Arita M."/>
            <person name="Imose N."/>
            <person name="Musashino K."/>
            <person name="Yuuki H."/>
            <person name="Oshima A."/>
            <person name="Sasaki N."/>
            <person name="Aotsuka S."/>
            <person name="Yoshikawa Y."/>
            <person name="Matsunawa H."/>
            <person name="Ichihara T."/>
            <person name="Shiohata N."/>
            <person name="Sano S."/>
            <person name="Moriya S."/>
            <person name="Momiyama H."/>
            <person name="Satoh N."/>
            <person name="Takami S."/>
            <person name="Terashima Y."/>
            <person name="Suzuki O."/>
            <person name="Nakagawa S."/>
            <person name="Senoh A."/>
            <person name="Mizoguchi H."/>
            <person name="Goto Y."/>
            <person name="Shimizu F."/>
            <person name="Wakebe H."/>
            <person name="Hishigaki H."/>
            <person name="Watanabe T."/>
            <person name="Sugiyama A."/>
            <person name="Takemoto M."/>
            <person name="Kawakami B."/>
            <person name="Yamazaki M."/>
            <person name="Watanabe K."/>
            <person name="Kumagai A."/>
            <person name="Itakura S."/>
            <person name="Fukuzumi Y."/>
            <person name="Fujimori Y."/>
            <person name="Komiyama M."/>
            <person name="Tashiro H."/>
            <person name="Tanigami A."/>
            <person name="Fujiwara T."/>
            <person name="Ono T."/>
            <person name="Yamada K."/>
            <person name="Fujii Y."/>
            <person name="Ozaki K."/>
            <person name="Hirao M."/>
            <person name="Ohmori Y."/>
            <person name="Kawabata A."/>
            <person name="Hikiji T."/>
            <person name="Kobatake N."/>
            <person name="Inagaki H."/>
            <person name="Ikema Y."/>
            <person name="Okamoto S."/>
            <person name="Okitani R."/>
            <person name="Kawakami T."/>
            <person name="Noguchi S."/>
            <person name="Itoh T."/>
            <person name="Shigeta K."/>
            <person name="Senba T."/>
            <person name="Matsumura K."/>
            <person name="Nakajima Y."/>
            <person name="Mizuno T."/>
            <person name="Morinaga M."/>
            <person name="Sasaki M."/>
            <person name="Togashi T."/>
            <person name="Oyama M."/>
            <person name="Hata H."/>
            <person name="Watanabe M."/>
            <person name="Komatsu T."/>
            <person name="Mizushima-Sugano J."/>
            <person name="Satoh T."/>
            <person name="Shirai Y."/>
            <person name="Takahashi Y."/>
            <person name="Nakagawa K."/>
            <person name="Okumura K."/>
            <person name="Nagase T."/>
            <person name="Nomura N."/>
            <person name="Kikuchi H."/>
            <person name="Masuho Y."/>
            <person name="Yamashita R."/>
            <person name="Nakai K."/>
            <person name="Yada T."/>
            <person name="Nakamura Y."/>
            <person name="Ohara O."/>
            <person name="Isogai T."/>
            <person name="Sugano S."/>
        </authorList>
    </citation>
    <scope>NUCLEOTIDE SEQUENCE [LARGE SCALE MRNA] (ISOFORMS 1 AND 3)</scope>
    <source>
        <tissue>Brain</tissue>
        <tissue>Synovial cell</tissue>
        <tissue>Teratocarcinoma</tissue>
        <tissue>Thalamus</tissue>
    </source>
</reference>
<reference key="3">
    <citation type="journal article" date="2007" name="BMC Genomics">
        <title>The full-ORF clone resource of the German cDNA consortium.</title>
        <authorList>
            <person name="Bechtel S."/>
            <person name="Rosenfelder H."/>
            <person name="Duda A."/>
            <person name="Schmidt C.P."/>
            <person name="Ernst U."/>
            <person name="Wellenreuther R."/>
            <person name="Mehrle A."/>
            <person name="Schuster C."/>
            <person name="Bahr A."/>
            <person name="Bloecker H."/>
            <person name="Heubner D."/>
            <person name="Hoerlein A."/>
            <person name="Michel G."/>
            <person name="Wedler H."/>
            <person name="Koehrer K."/>
            <person name="Ottenwaelder B."/>
            <person name="Poustka A."/>
            <person name="Wiemann S."/>
            <person name="Schupp I."/>
        </authorList>
    </citation>
    <scope>NUCLEOTIDE SEQUENCE [LARGE SCALE MRNA] (ISOFORM 2)</scope>
    <source>
        <tissue>Amygdala</tissue>
    </source>
</reference>
<reference key="4">
    <citation type="submission" date="2005-09" db="EMBL/GenBank/DDBJ databases">
        <authorList>
            <person name="Mural R.J."/>
            <person name="Istrail S."/>
            <person name="Sutton G.G."/>
            <person name="Florea L."/>
            <person name="Halpern A.L."/>
            <person name="Mobarry C.M."/>
            <person name="Lippert R."/>
            <person name="Walenz B."/>
            <person name="Shatkay H."/>
            <person name="Dew I."/>
            <person name="Miller J.R."/>
            <person name="Flanigan M.J."/>
            <person name="Edwards N.J."/>
            <person name="Bolanos R."/>
            <person name="Fasulo D."/>
            <person name="Halldorsson B.V."/>
            <person name="Hannenhalli S."/>
            <person name="Turner R."/>
            <person name="Yooseph S."/>
            <person name="Lu F."/>
            <person name="Nusskern D.R."/>
            <person name="Shue B.C."/>
            <person name="Zheng X.H."/>
            <person name="Zhong F."/>
            <person name="Delcher A.L."/>
            <person name="Huson D.H."/>
            <person name="Kravitz S.A."/>
            <person name="Mouchard L."/>
            <person name="Reinert K."/>
            <person name="Remington K.A."/>
            <person name="Clark A.G."/>
            <person name="Waterman M.S."/>
            <person name="Eichler E.E."/>
            <person name="Adams M.D."/>
            <person name="Hunkapiller M.W."/>
            <person name="Myers E.W."/>
            <person name="Venter J.C."/>
        </authorList>
    </citation>
    <scope>NUCLEOTIDE SEQUENCE [LARGE SCALE GENOMIC DNA]</scope>
</reference>
<reference key="5">
    <citation type="journal article" date="2004" name="Genome Res.">
        <title>The status, quality, and expansion of the NIH full-length cDNA project: the Mammalian Gene Collection (MGC).</title>
        <authorList>
            <consortium name="The MGC Project Team"/>
        </authorList>
    </citation>
    <scope>NUCLEOTIDE SEQUENCE [LARGE SCALE MRNA] (ISOFORM 1)</scope>
    <source>
        <tissue>Brain</tissue>
    </source>
</reference>
<reference key="6">
    <citation type="journal article" date="2005" name="J. Cell Sci.">
        <title>Secretory carrier membrane proteins interact and regulate trafficking of the organellar (Na+,K+)/H+ exchanger NHE7.</title>
        <authorList>
            <person name="Lin P.J."/>
            <person name="Williams W.P."/>
            <person name="Luu Y."/>
            <person name="Molday R.S."/>
            <person name="Orlowski J."/>
            <person name="Numata M."/>
        </authorList>
    </citation>
    <scope>SUBCELLULAR LOCATION</scope>
    <scope>INTERACTION WITH SLC9A7</scope>
</reference>
<reference key="7">
    <citation type="journal article" date="2009" name="J. Biol. Chem.">
        <title>SCAMP5 links endoplasmic reticulum stress to the accumulation of expanded polyglutamine protein aggregates via endocytosis inhibition.</title>
        <authorList>
            <person name="Noh J.-Y."/>
            <person name="Lee H."/>
            <person name="Song S."/>
            <person name="Kim N.S."/>
            <person name="Im W."/>
            <person name="Kim M."/>
            <person name="Seo H.-M."/>
            <person name="Chung C.-W."/>
            <person name="Chang J.-W."/>
            <person name="Ferrante R.J."/>
            <person name="Yoo Y.-J."/>
            <person name="Ryu H."/>
            <person name="Jung Y.-K."/>
        </authorList>
    </citation>
    <scope>POSSIBLE FUNCTION</scope>
    <scope>INDUCTION</scope>
</reference>
<dbReference type="EMBL" id="AF495715">
    <property type="protein sequence ID" value="AAM18052.1"/>
    <property type="molecule type" value="mRNA"/>
</dbReference>
<dbReference type="EMBL" id="AK056438">
    <property type="protein sequence ID" value="BAG51709.1"/>
    <property type="molecule type" value="mRNA"/>
</dbReference>
<dbReference type="EMBL" id="AK126940">
    <property type="protein sequence ID" value="BAG54404.1"/>
    <property type="molecule type" value="mRNA"/>
</dbReference>
<dbReference type="EMBL" id="AK127480">
    <property type="protein sequence ID" value="BAG54511.1"/>
    <property type="molecule type" value="mRNA"/>
</dbReference>
<dbReference type="EMBL" id="AK301505">
    <property type="protein sequence ID" value="BAH13498.1"/>
    <property type="molecule type" value="mRNA"/>
</dbReference>
<dbReference type="EMBL" id="AL834226">
    <property type="protein sequence ID" value="CAD38904.1"/>
    <property type="molecule type" value="mRNA"/>
</dbReference>
<dbReference type="EMBL" id="CH471136">
    <property type="protein sequence ID" value="EAW99277.1"/>
    <property type="molecule type" value="Genomic_DNA"/>
</dbReference>
<dbReference type="EMBL" id="CH471136">
    <property type="protein sequence ID" value="EAW99278.1"/>
    <property type="molecule type" value="Genomic_DNA"/>
</dbReference>
<dbReference type="EMBL" id="CH471136">
    <property type="protein sequence ID" value="EAW99280.1"/>
    <property type="molecule type" value="Genomic_DNA"/>
</dbReference>
<dbReference type="EMBL" id="CH471136">
    <property type="protein sequence ID" value="EAW99283.1"/>
    <property type="molecule type" value="Genomic_DNA"/>
</dbReference>
<dbReference type="EMBL" id="BC024700">
    <property type="protein sequence ID" value="AAH24700.1"/>
    <property type="molecule type" value="mRNA"/>
</dbReference>
<dbReference type="CCDS" id="CCDS45306.1">
    <molecule id="Q8TAC9-1"/>
</dbReference>
<dbReference type="RefSeq" id="NP_001171582.1">
    <molecule id="Q8TAC9-1"/>
    <property type="nucleotide sequence ID" value="NM_001178111.2"/>
</dbReference>
<dbReference type="RefSeq" id="NP_001171583.1">
    <molecule id="Q8TAC9-1"/>
    <property type="nucleotide sequence ID" value="NM_001178112.2"/>
</dbReference>
<dbReference type="RefSeq" id="NP_620417.1">
    <molecule id="Q8TAC9-1"/>
    <property type="nucleotide sequence ID" value="NM_138967.4"/>
</dbReference>
<dbReference type="RefSeq" id="XP_006720484.1">
    <molecule id="Q8TAC9-1"/>
    <property type="nucleotide sequence ID" value="XM_006720421.2"/>
</dbReference>
<dbReference type="RefSeq" id="XP_006720485.1">
    <property type="nucleotide sequence ID" value="XM_006720422.3"/>
</dbReference>
<dbReference type="RefSeq" id="XP_016877478.1">
    <property type="nucleotide sequence ID" value="XM_017021989.1"/>
</dbReference>
<dbReference type="RefSeq" id="XP_047288175.1">
    <molecule id="Q8TAC9-1"/>
    <property type="nucleotide sequence ID" value="XM_047432219.1"/>
</dbReference>
<dbReference type="RefSeq" id="XP_054233415.1">
    <molecule id="Q8TAC9-1"/>
    <property type="nucleotide sequence ID" value="XM_054377440.1"/>
</dbReference>
<dbReference type="RefSeq" id="XP_054233416.1">
    <molecule id="Q8TAC9-1"/>
    <property type="nucleotide sequence ID" value="XM_054377441.1"/>
</dbReference>
<dbReference type="SMR" id="Q8TAC9"/>
<dbReference type="BioGRID" id="128182">
    <property type="interactions" value="23"/>
</dbReference>
<dbReference type="FunCoup" id="Q8TAC9">
    <property type="interactions" value="474"/>
</dbReference>
<dbReference type="IntAct" id="Q8TAC9">
    <property type="interactions" value="32"/>
</dbReference>
<dbReference type="MINT" id="Q8TAC9"/>
<dbReference type="STRING" id="9606.ENSP00000355387"/>
<dbReference type="TCDB" id="8.A.103.1.5">
    <property type="family name" value="the secretory carrier-associated membrane protein (scamp) family"/>
</dbReference>
<dbReference type="iPTMnet" id="Q8TAC9"/>
<dbReference type="PhosphoSitePlus" id="Q8TAC9"/>
<dbReference type="SwissPalm" id="Q8TAC9"/>
<dbReference type="BioMuta" id="SCAMP5"/>
<dbReference type="DMDM" id="47117253"/>
<dbReference type="jPOST" id="Q8TAC9"/>
<dbReference type="MassIVE" id="Q8TAC9"/>
<dbReference type="PaxDb" id="9606-ENSP00000355387"/>
<dbReference type="PeptideAtlas" id="Q8TAC9"/>
<dbReference type="ProteomicsDB" id="73856">
    <molecule id="Q8TAC9-1"/>
</dbReference>
<dbReference type="ProteomicsDB" id="73857">
    <molecule id="Q8TAC9-2"/>
</dbReference>
<dbReference type="ProteomicsDB" id="73858">
    <molecule id="Q8TAC9-3"/>
</dbReference>
<dbReference type="Antibodypedia" id="27182">
    <property type="antibodies" value="57 antibodies from 15 providers"/>
</dbReference>
<dbReference type="DNASU" id="192683"/>
<dbReference type="Ensembl" id="ENST00000361900.10">
    <molecule id="Q8TAC9-1"/>
    <property type="protein sequence ID" value="ENSP00000355387.6"/>
    <property type="gene ID" value="ENSG00000198794.12"/>
</dbReference>
<dbReference type="Ensembl" id="ENST00000425597.8">
    <molecule id="Q8TAC9-1"/>
    <property type="protein sequence ID" value="ENSP00000406547.3"/>
    <property type="gene ID" value="ENSG00000198794.12"/>
</dbReference>
<dbReference type="Ensembl" id="ENST00000562212.5">
    <molecule id="Q8TAC9-2"/>
    <property type="protein sequence ID" value="ENSP00000455313.1"/>
    <property type="gene ID" value="ENSG00000198794.12"/>
</dbReference>
<dbReference type="GeneID" id="192683"/>
<dbReference type="KEGG" id="hsa:192683"/>
<dbReference type="MANE-Select" id="ENST00000425597.8">
    <property type="protein sequence ID" value="ENSP00000406547.3"/>
    <property type="RefSeq nucleotide sequence ID" value="NM_138967.4"/>
    <property type="RefSeq protein sequence ID" value="NP_620417.1"/>
</dbReference>
<dbReference type="UCSC" id="uc002azk.3">
    <molecule id="Q8TAC9-1"/>
    <property type="organism name" value="human"/>
</dbReference>
<dbReference type="AGR" id="HGNC:30386"/>
<dbReference type="CTD" id="192683"/>
<dbReference type="DisGeNET" id="192683"/>
<dbReference type="GeneCards" id="SCAMP5"/>
<dbReference type="HGNC" id="HGNC:30386">
    <property type="gene designation" value="SCAMP5"/>
</dbReference>
<dbReference type="HPA" id="ENSG00000198794">
    <property type="expression patterns" value="Tissue enhanced (brain, retina)"/>
</dbReference>
<dbReference type="MalaCards" id="SCAMP5"/>
<dbReference type="MIM" id="613766">
    <property type="type" value="gene"/>
</dbReference>
<dbReference type="neXtProt" id="NX_Q8TAC9"/>
<dbReference type="OpenTargets" id="ENSG00000198794"/>
<dbReference type="PharmGKB" id="PA134962580"/>
<dbReference type="VEuPathDB" id="HostDB:ENSG00000198794"/>
<dbReference type="eggNOG" id="KOG3088">
    <property type="taxonomic scope" value="Eukaryota"/>
</dbReference>
<dbReference type="GeneTree" id="ENSGT00940000157577"/>
<dbReference type="InParanoid" id="Q8TAC9"/>
<dbReference type="OMA" id="TWPVGWI"/>
<dbReference type="OrthoDB" id="242866at2759"/>
<dbReference type="PAN-GO" id="Q8TAC9">
    <property type="GO annotations" value="3 GO annotations based on evolutionary models"/>
</dbReference>
<dbReference type="PhylomeDB" id="Q8TAC9"/>
<dbReference type="TreeFam" id="TF313797"/>
<dbReference type="PathwayCommons" id="Q8TAC9"/>
<dbReference type="SignaLink" id="Q8TAC9"/>
<dbReference type="BioGRID-ORCS" id="192683">
    <property type="hits" value="18 hits in 1148 CRISPR screens"/>
</dbReference>
<dbReference type="ChiTaRS" id="SCAMP5">
    <property type="organism name" value="human"/>
</dbReference>
<dbReference type="GeneWiki" id="SCAMP5"/>
<dbReference type="GenomeRNAi" id="192683"/>
<dbReference type="Pharos" id="Q8TAC9">
    <property type="development level" value="Tbio"/>
</dbReference>
<dbReference type="PRO" id="PR:Q8TAC9"/>
<dbReference type="Proteomes" id="UP000005640">
    <property type="component" value="Chromosome 15"/>
</dbReference>
<dbReference type="RNAct" id="Q8TAC9">
    <property type="molecule type" value="protein"/>
</dbReference>
<dbReference type="Bgee" id="ENSG00000198794">
    <property type="expression patterns" value="Expressed in right hemisphere of cerebellum and 139 other cell types or tissues"/>
</dbReference>
<dbReference type="ExpressionAtlas" id="Q8TAC9">
    <property type="expression patterns" value="baseline and differential"/>
</dbReference>
<dbReference type="GO" id="GO:0000139">
    <property type="term" value="C:Golgi membrane"/>
    <property type="evidence" value="ECO:0000314"/>
    <property type="project" value="UniProtKB"/>
</dbReference>
<dbReference type="GO" id="GO:0016020">
    <property type="term" value="C:membrane"/>
    <property type="evidence" value="ECO:0000314"/>
    <property type="project" value="UniProtKB"/>
</dbReference>
<dbReference type="GO" id="GO:0005886">
    <property type="term" value="C:plasma membrane"/>
    <property type="evidence" value="ECO:0000314"/>
    <property type="project" value="UniProtKB"/>
</dbReference>
<dbReference type="GO" id="GO:0055038">
    <property type="term" value="C:recycling endosome membrane"/>
    <property type="evidence" value="ECO:0000314"/>
    <property type="project" value="UniProtKB"/>
</dbReference>
<dbReference type="GO" id="GO:0030672">
    <property type="term" value="C:synaptic vesicle membrane"/>
    <property type="evidence" value="ECO:0007669"/>
    <property type="project" value="UniProtKB-SubCell"/>
</dbReference>
<dbReference type="GO" id="GO:0032588">
    <property type="term" value="C:trans-Golgi network membrane"/>
    <property type="evidence" value="ECO:0000314"/>
    <property type="project" value="UniProtKB"/>
</dbReference>
<dbReference type="GO" id="GO:0044877">
    <property type="term" value="F:protein-containing complex binding"/>
    <property type="evidence" value="ECO:0000314"/>
    <property type="project" value="UniProtKB"/>
</dbReference>
<dbReference type="GO" id="GO:0006887">
    <property type="term" value="P:exocytosis"/>
    <property type="evidence" value="ECO:0007669"/>
    <property type="project" value="UniProtKB-KW"/>
</dbReference>
<dbReference type="GO" id="GO:0045806">
    <property type="term" value="P:negative regulation of endocytosis"/>
    <property type="evidence" value="ECO:0000314"/>
    <property type="project" value="UniProtKB"/>
</dbReference>
<dbReference type="GO" id="GO:0045956">
    <property type="term" value="P:positive regulation of calcium ion-dependent exocytosis"/>
    <property type="evidence" value="ECO:0000314"/>
    <property type="project" value="UniProtKB"/>
</dbReference>
<dbReference type="GO" id="GO:0001819">
    <property type="term" value="P:positive regulation of cytokine production"/>
    <property type="evidence" value="ECO:0000314"/>
    <property type="project" value="UniProtKB"/>
</dbReference>
<dbReference type="GO" id="GO:0015031">
    <property type="term" value="P:protein transport"/>
    <property type="evidence" value="ECO:0000318"/>
    <property type="project" value="GO_Central"/>
</dbReference>
<dbReference type="GO" id="GO:0034976">
    <property type="term" value="P:response to endoplasmic reticulum stress"/>
    <property type="evidence" value="ECO:0000314"/>
    <property type="project" value="UniProtKB"/>
</dbReference>
<dbReference type="InterPro" id="IPR007273">
    <property type="entry name" value="SCAMP"/>
</dbReference>
<dbReference type="PANTHER" id="PTHR10687:SF5">
    <property type="entry name" value="SECRETORY CARRIER-ASSOCIATED MEMBRANE PROTEIN 5"/>
    <property type="match status" value="1"/>
</dbReference>
<dbReference type="PANTHER" id="PTHR10687">
    <property type="entry name" value="SECRETORY CARRIER-ASSOCIATED MEMBRANE PROTEIN SCAMP"/>
    <property type="match status" value="1"/>
</dbReference>
<dbReference type="Pfam" id="PF04144">
    <property type="entry name" value="SCAMP"/>
    <property type="match status" value="1"/>
</dbReference>
<gene>
    <name type="primary">SCAMP5</name>
</gene>
<name>SCAM5_HUMAN</name>
<sequence>MAEKVNNFPPLPKFIPLKPCFYQDFEADIPPQHVSMTKRLYYLWMLNSVTLAVNLVGCLAWLIGGGGATNFGLAFLWLILFTPCSYVCWFRPIYKAFKTDSSFSFMAFFFTFMAQLVISIIQAVGIPGWGVCGWIATISFFGTNIGSAVVMLIPTVMFTVMAVFSFIALSMVHKFYRGSGGSFSKAQEEWTTGAWKNPHVQQAAQNAAMGAAQGAMNQPQTQYSATPNYTYSNEM</sequence>
<keyword id="KW-0025">Alternative splicing</keyword>
<keyword id="KW-1003">Cell membrane</keyword>
<keyword id="KW-0968">Cytoplasmic vesicle</keyword>
<keyword id="KW-0967">Endosome</keyword>
<keyword id="KW-0268">Exocytosis</keyword>
<keyword id="KW-0333">Golgi apparatus</keyword>
<keyword id="KW-0472">Membrane</keyword>
<keyword id="KW-0653">Protein transport</keyword>
<keyword id="KW-1267">Proteomics identification</keyword>
<keyword id="KW-1185">Reference proteome</keyword>
<keyword id="KW-0770">Synapse</keyword>
<keyword id="KW-0812">Transmembrane</keyword>
<keyword id="KW-1133">Transmembrane helix</keyword>
<keyword id="KW-0813">Transport</keyword>
<evidence type="ECO:0000250" key="1"/>
<evidence type="ECO:0000255" key="2"/>
<evidence type="ECO:0000269" key="3">
    <source>
    </source>
</evidence>
<evidence type="ECO:0000269" key="4">
    <source>
    </source>
</evidence>
<evidence type="ECO:0000269" key="5">
    <source>
    </source>
</evidence>
<evidence type="ECO:0000303" key="6">
    <source>
    </source>
</evidence>
<evidence type="ECO:0000303" key="7">
    <source>
    </source>
</evidence>
<evidence type="ECO:0000305" key="8"/>
<comment type="function">
    <text evidence="4">Required for the calcium-dependent exocytosis of signal sequence-containing cytokines such as CCL5. Probably acts in cooperation with the SNARE machinery. May play a role in accumulation of expanded polyglutamine (polyQ) protein huntingtin (HTT) in case of endoplasmic reticulum stress by inhibiting the endocytosis pathway.</text>
</comment>
<comment type="subunit">
    <text evidence="3 4">Interacts (via C-terminal part) with SYT1 and SYT2; interaction with synaptotagmins making a link with the SNARE molecules. Interacts with SLC9A7.</text>
</comment>
<comment type="interaction">
    <interactant intactId="EBI-2695784">
        <id>Q8TAC9</id>
    </interactant>
    <interactant intactId="EBI-13059134">
        <id>Q13520</id>
        <label>AQP6</label>
    </interactant>
    <organismsDiffer>false</organismsDiffer>
    <experiments>3</experiments>
</comment>
<comment type="interaction">
    <interactant intactId="EBI-2695784">
        <id>Q8TAC9</id>
    </interactant>
    <interactant intactId="EBI-638194">
        <id>P53365</id>
        <label>ARFIP2</label>
    </interactant>
    <organismsDiffer>false</organismsDiffer>
    <experiments>3</experiments>
</comment>
<comment type="interaction">
    <interactant intactId="EBI-2695784">
        <id>Q8TAC9</id>
    </interactant>
    <interactant intactId="EBI-2622997">
        <id>Q9HA82</id>
        <label>CERS4</label>
    </interactant>
    <organismsDiffer>false</organismsDiffer>
    <experiments>3</experiments>
</comment>
<comment type="interaction">
    <interactant intactId="EBI-2695784">
        <id>Q8TAC9</id>
    </interactant>
    <interactant intactId="EBI-743099">
        <id>Q969F0</id>
        <label>FATE1</label>
    </interactant>
    <organismsDiffer>false</organismsDiffer>
    <experiments>3</experiments>
</comment>
<comment type="interaction">
    <interactant intactId="EBI-2695784">
        <id>Q8TAC9</id>
    </interactant>
    <interactant intactId="EBI-12702062">
        <id>P39905-3</id>
        <label>GDNF</label>
    </interactant>
    <organismsDiffer>false</organismsDiffer>
    <experiments>3</experiments>
</comment>
<comment type="interaction">
    <interactant intactId="EBI-2695784">
        <id>Q8TAC9</id>
    </interactant>
    <interactant intactId="EBI-18053395">
        <id>Q7Z5P4</id>
        <label>HSD17B13</label>
    </interactant>
    <organismsDiffer>false</organismsDiffer>
    <experiments>3</experiments>
</comment>
<comment type="interaction">
    <interactant intactId="EBI-2695784">
        <id>Q8TAC9</id>
    </interactant>
    <interactant intactId="EBI-17263240">
        <id>P15941-11</id>
        <label>MUC1</label>
    </interactant>
    <organismsDiffer>false</organismsDiffer>
    <experiments>3</experiments>
</comment>
<comment type="interaction">
    <interactant intactId="EBI-2695784">
        <id>Q8TAC9</id>
    </interactant>
    <interactant intactId="EBI-17630288">
        <id>P57054</id>
        <label>PIGP</label>
    </interactant>
    <organismsDiffer>false</organismsDiffer>
    <experiments>3</experiments>
</comment>
<comment type="interaction">
    <interactant intactId="EBI-2695784">
        <id>Q8TAC9</id>
    </interactant>
    <interactant intactId="EBI-14223623">
        <id>Q9UKF7-2</id>
        <label>PITPNC1</label>
    </interactant>
    <organismsDiffer>false</organismsDiffer>
    <experiments>3</experiments>
</comment>
<comment type="interaction">
    <interactant intactId="EBI-2695784">
        <id>Q8TAC9</id>
    </interactant>
    <interactant intactId="EBI-1046170">
        <id>O95470</id>
        <label>SGPL1</label>
    </interactant>
    <organismsDiffer>false</organismsDiffer>
    <experiments>3</experiments>
</comment>
<comment type="interaction">
    <interactant intactId="EBI-2695784">
        <id>Q8TAC9</id>
    </interactant>
    <interactant intactId="EBI-697911">
        <id>Q99961</id>
        <label>SH3GL1</label>
    </interactant>
    <organismsDiffer>false</organismsDiffer>
    <experiments>3</experiments>
</comment>
<comment type="interaction">
    <interactant intactId="EBI-2695784">
        <id>Q8TAC9</id>
    </interactant>
    <interactant intactId="EBI-18037857">
        <id>Q3SXP7</id>
        <label>SHISAL1</label>
    </interactant>
    <organismsDiffer>false</organismsDiffer>
    <experiments>3</experiments>
</comment>
<comment type="interaction">
    <interactant intactId="EBI-2695784">
        <id>Q8TAC9</id>
    </interactant>
    <interactant intactId="EBI-18159983">
        <id>Q3KNW5</id>
        <label>SLC10A6</label>
    </interactant>
    <organismsDiffer>false</organismsDiffer>
    <experiments>3</experiments>
</comment>
<comment type="interaction">
    <interactant intactId="EBI-2695784">
        <id>Q8TAC9</id>
    </interactant>
    <interactant intactId="EBI-6268651">
        <id>Q9NPL8</id>
        <label>TIMMDC1</label>
    </interactant>
    <organismsDiffer>false</organismsDiffer>
    <experiments>3</experiments>
</comment>
<comment type="interaction">
    <interactant intactId="EBI-2695784">
        <id>Q8TAC9</id>
    </interactant>
    <interactant intactId="EBI-12947623">
        <id>Q96MV1</id>
        <label>TLCD4</label>
    </interactant>
    <organismsDiffer>false</organismsDiffer>
    <experiments>3</experiments>
</comment>
<comment type="interaction">
    <interactant intactId="EBI-2695784">
        <id>Q8TAC9</id>
    </interactant>
    <interactant intactId="EBI-8638294">
        <id>Q9NUH8</id>
        <label>TMEM14B</label>
    </interactant>
    <organismsDiffer>false</organismsDiffer>
    <experiments>3</experiments>
</comment>
<comment type="interaction">
    <interactant intactId="EBI-2695784">
        <id>Q8TAC9</id>
    </interactant>
    <interactant intactId="EBI-6447886">
        <id>Q9Y320</id>
        <label>TMX2</label>
    </interactant>
    <organismsDiffer>false</organismsDiffer>
    <experiments>3</experiments>
</comment>
<comment type="interaction">
    <interactant intactId="EBI-2695784">
        <id>Q8TAC9</id>
    </interactant>
    <interactant intactId="EBI-10210710">
        <id>P49638</id>
        <label>TTPA</label>
    </interactant>
    <organismsDiffer>false</organismsDiffer>
    <experiments>3</experiments>
</comment>
<comment type="interaction">
    <interactant intactId="EBI-2695784">
        <id>Q8TAC9</id>
    </interactant>
    <interactant intactId="EBI-445340">
        <id>P46096</id>
        <label>Syt1</label>
    </interactant>
    <organismsDiffer>true</organismsDiffer>
    <experiments>2</experiments>
</comment>
<comment type="interaction">
    <interactant intactId="EBI-2695784">
        <id>Q8TAC9</id>
    </interactant>
    <interactant intactId="EBI-457969">
        <id>P46097</id>
        <label>Syt2</label>
    </interactant>
    <organismsDiffer>true</organismsDiffer>
    <experiments>2</experiments>
</comment>
<comment type="subcellular location">
    <subcellularLocation>
        <location>Cell membrane</location>
        <topology>Multi-pass membrane protein</topology>
    </subcellularLocation>
    <subcellularLocation>
        <location>Golgi apparatus membrane</location>
        <topology>Multi-pass membrane protein</topology>
    </subcellularLocation>
    <subcellularLocation>
        <location>Golgi apparatus</location>
        <location>trans-Golgi network membrane</location>
        <topology>Multi-pass membrane protein</topology>
    </subcellularLocation>
    <subcellularLocation>
        <location>Recycling endosome membrane</location>
        <topology>Multi-pass membrane protein</topology>
    </subcellularLocation>
    <subcellularLocation>
        <location evidence="1">Cytoplasmic vesicle</location>
        <location evidence="1">Secretory vesicle</location>
        <location evidence="1">Synaptic vesicle membrane</location>
        <topology evidence="1">Multi-pass membrane protein</topology>
    </subcellularLocation>
    <text evidence="1">Mainly localizes in Golgi apparatus membrane. Upon calcium-triggered exocytosis, it translocates to the cell membrane. Highly enriched in synaptic vesicles (By similarity).</text>
</comment>
<comment type="alternative products">
    <event type="alternative splicing"/>
    <isoform>
        <id>Q8TAC9-1</id>
        <name>1</name>
        <sequence type="displayed"/>
    </isoform>
    <isoform>
        <id>Q8TAC9-2</id>
        <name>2</name>
        <sequence type="described" ref="VSP_010206"/>
    </isoform>
    <isoform>
        <id>Q8TAC9-3</id>
        <name>3</name>
        <sequence type="described" ref="VSP_036934"/>
    </isoform>
</comment>
<comment type="tissue specificity">
    <text evidence="4">Expressed both by neuronal and non-neuronal tissues. Expressed in brain, stomach, thyroid, spinal cord, lymph node, trachea, adrenal gland, bone marrow and in the different parts of brain. In thyroid tissues, it is expressed by the follicular epithelial cells. In the adrenal gland tissues it is detected in the zona fasciculata of the cortex region (at protein level).</text>
</comment>
<comment type="induction">
    <text evidence="5">By endoplasmic reticulum stress.</text>
</comment>
<comment type="similarity">
    <text evidence="8">Belongs to the SCAMP family. SCAMP5 subfamily.</text>
</comment>
<organism>
    <name type="scientific">Homo sapiens</name>
    <name type="common">Human</name>
    <dbReference type="NCBI Taxonomy" id="9606"/>
    <lineage>
        <taxon>Eukaryota</taxon>
        <taxon>Metazoa</taxon>
        <taxon>Chordata</taxon>
        <taxon>Craniata</taxon>
        <taxon>Vertebrata</taxon>
        <taxon>Euteleostomi</taxon>
        <taxon>Mammalia</taxon>
        <taxon>Eutheria</taxon>
        <taxon>Euarchontoglires</taxon>
        <taxon>Primates</taxon>
        <taxon>Haplorrhini</taxon>
        <taxon>Catarrhini</taxon>
        <taxon>Hominidae</taxon>
        <taxon>Homo</taxon>
    </lineage>
</organism>
<proteinExistence type="evidence at protein level"/>
<accession>Q8TAC9</accession>
<accession>B3KPJ7</accession>
<accession>B7Z762</accession>
<accession>D3DW71</accession>
<accession>Q8N3M4</accession>
<feature type="chain" id="PRO_0000191262" description="Secretory carrier-associated membrane protein 5">
    <location>
        <begin position="1"/>
        <end position="235"/>
    </location>
</feature>
<feature type="topological domain" description="Cytoplasmic" evidence="2">
    <location>
        <begin position="1"/>
        <end position="39"/>
    </location>
</feature>
<feature type="transmembrane region" description="Helical" evidence="2">
    <location>
        <begin position="40"/>
        <end position="60"/>
    </location>
</feature>
<feature type="topological domain" description="Extracellular" evidence="2">
    <location>
        <begin position="61"/>
        <end position="67"/>
    </location>
</feature>
<feature type="transmembrane region" description="Helical" evidence="2">
    <location>
        <begin position="68"/>
        <end position="88"/>
    </location>
</feature>
<feature type="topological domain" description="Cytoplasmic" evidence="2">
    <location>
        <begin position="89"/>
        <end position="102"/>
    </location>
</feature>
<feature type="transmembrane region" description="Helical" evidence="2">
    <location>
        <begin position="103"/>
        <end position="125"/>
    </location>
</feature>
<feature type="topological domain" description="Extracellular" evidence="2">
    <location>
        <begin position="126"/>
        <end position="148"/>
    </location>
</feature>
<feature type="transmembrane region" description="Helical" evidence="2">
    <location>
        <begin position="149"/>
        <end position="169"/>
    </location>
</feature>
<feature type="topological domain" description="Cytoplasmic" evidence="2">
    <location>
        <begin position="170"/>
        <end position="235"/>
    </location>
</feature>
<feature type="splice variant" id="VSP_036934" description="In isoform 3." evidence="6">
    <original>MAEKVNNFPPLPKFIPLKPCFYQDFEADIPPQHVSMTKRLYYLWMLNSVTLAVNLVGCLAWLIGGGGATNFGLAFLWLILFTPCSYVCWFRPIYKAFK</original>
    <variation>MFLPRLRGRYSSPACQHDQAPLLPLDV</variation>
    <location>
        <begin position="1"/>
        <end position="98"/>
    </location>
</feature>
<feature type="splice variant" id="VSP_010206" description="In isoform 2." evidence="7">
    <original>C</original>
    <variation>CPTLASSCS</variation>
    <location>
        <position position="132"/>
    </location>
</feature>